<gene>
    <name type="primary">ppdpf</name>
    <name type="synonym">exdpf</name>
</gene>
<proteinExistence type="inferred from homology"/>
<organism>
    <name type="scientific">Xenopus tropicalis</name>
    <name type="common">Western clawed frog</name>
    <name type="synonym">Silurana tropicalis</name>
    <dbReference type="NCBI Taxonomy" id="8364"/>
    <lineage>
        <taxon>Eukaryota</taxon>
        <taxon>Metazoa</taxon>
        <taxon>Chordata</taxon>
        <taxon>Craniata</taxon>
        <taxon>Vertebrata</taxon>
        <taxon>Euteleostomi</taxon>
        <taxon>Amphibia</taxon>
        <taxon>Batrachia</taxon>
        <taxon>Anura</taxon>
        <taxon>Pipoidea</taxon>
        <taxon>Pipidae</taxon>
        <taxon>Xenopodinae</taxon>
        <taxon>Xenopus</taxon>
        <taxon>Silurana</taxon>
    </lineage>
</organism>
<keyword id="KW-0217">Developmental protein</keyword>
<keyword id="KW-0221">Differentiation</keyword>
<keyword id="KW-1185">Reference proteome</keyword>
<name>PPDPF_XENTR</name>
<sequence>MAAIPSSGSLVATHDYYRRRLGSTSSNSSCGSVDYSGEVIPHHPGLPKSDPGHWWASFFFGKSTHPSMTTVSESPESSGTFSISNGLIPCRLAQESLQKQKVGDPKSDSSPSA</sequence>
<dbReference type="EMBL" id="BC135255">
    <property type="protein sequence ID" value="AAI35256.1"/>
    <property type="molecule type" value="mRNA"/>
</dbReference>
<dbReference type="RefSeq" id="NP_001090812.1">
    <property type="nucleotide sequence ID" value="NM_001097343.1"/>
</dbReference>
<dbReference type="FunCoup" id="A4IGU9">
    <property type="interactions" value="43"/>
</dbReference>
<dbReference type="PaxDb" id="8364-ENSXETP00000025076"/>
<dbReference type="DNASU" id="100037910"/>
<dbReference type="GeneID" id="100037910"/>
<dbReference type="KEGG" id="xtr:100037910"/>
<dbReference type="AGR" id="Xenbase:XB-GENE-959557"/>
<dbReference type="CTD" id="79144"/>
<dbReference type="Xenbase" id="XB-GENE-959557">
    <property type="gene designation" value="ppdpf"/>
</dbReference>
<dbReference type="eggNOG" id="ENOG502S1KD">
    <property type="taxonomic scope" value="Eukaryota"/>
</dbReference>
<dbReference type="HOGENOM" id="CLU_157362_0_0_1"/>
<dbReference type="InParanoid" id="A4IGU9"/>
<dbReference type="OMA" id="WASCFFR"/>
<dbReference type="OrthoDB" id="9411431at2759"/>
<dbReference type="PhylomeDB" id="A4IGU9"/>
<dbReference type="TreeFam" id="TF333000"/>
<dbReference type="Proteomes" id="UP000008143">
    <property type="component" value="Chromosome 10"/>
</dbReference>
<dbReference type="GO" id="GO:0030154">
    <property type="term" value="P:cell differentiation"/>
    <property type="evidence" value="ECO:0007669"/>
    <property type="project" value="UniProtKB-KW"/>
</dbReference>
<dbReference type="InterPro" id="IPR026754">
    <property type="entry name" value="PPDPF"/>
</dbReference>
<dbReference type="PANTHER" id="PTHR14572">
    <property type="entry name" value="PANCREATIC PROGENITOR CELL DIFFERENTIATION AND PROLIFERATION FACTOR"/>
    <property type="match status" value="1"/>
</dbReference>
<dbReference type="Pfam" id="PF15060">
    <property type="entry name" value="PPDFL"/>
    <property type="match status" value="1"/>
</dbReference>
<dbReference type="PRINTS" id="PR02071">
    <property type="entry name" value="PPDPFACTOR"/>
</dbReference>
<comment type="function">
    <text evidence="1">Probable regulator of exocrine pancreas development.</text>
</comment>
<comment type="similarity">
    <text evidence="2">Belongs to the PPDPF family.</text>
</comment>
<protein>
    <recommendedName>
        <fullName>Pancreatic progenitor cell differentiation and proliferation factor</fullName>
    </recommendedName>
    <alternativeName>
        <fullName>Exocrine differentiation and proliferation factor</fullName>
    </alternativeName>
</protein>
<feature type="chain" id="PRO_0000359770" description="Pancreatic progenitor cell differentiation and proliferation factor">
    <location>
        <begin position="1"/>
        <end position="113"/>
    </location>
</feature>
<evidence type="ECO:0000250" key="1"/>
<evidence type="ECO:0000305" key="2"/>
<reference key="1">
    <citation type="submission" date="2007-03" db="EMBL/GenBank/DDBJ databases">
        <authorList>
            <consortium name="NIH - Xenopus Gene Collection (XGC) project"/>
        </authorList>
    </citation>
    <scope>NUCLEOTIDE SEQUENCE [LARGE SCALE MRNA]</scope>
    <source>
        <tissue>Tadpole</tissue>
    </source>
</reference>
<accession>A4IGU9</accession>